<keyword id="KW-0256">Endoplasmic reticulum</keyword>
<keyword id="KW-0349">Heme</keyword>
<keyword id="KW-0408">Iron</keyword>
<keyword id="KW-0444">Lipid biosynthesis</keyword>
<keyword id="KW-0443">Lipid metabolism</keyword>
<keyword id="KW-0472">Membrane</keyword>
<keyword id="KW-0479">Metal-binding</keyword>
<keyword id="KW-0597">Phosphoprotein</keyword>
<keyword id="KW-1185">Reference proteome</keyword>
<keyword id="KW-0752">Steroid biosynthesis</keyword>
<keyword id="KW-0753">Steroid metabolism</keyword>
<keyword id="KW-0756">Sterol biosynthesis</keyword>
<keyword id="KW-1207">Sterol metabolism</keyword>
<keyword id="KW-0346">Stress response</keyword>
<keyword id="KW-0812">Transmembrane</keyword>
<keyword id="KW-1133">Transmembrane helix</keyword>
<name>DAP1_SCHPO</name>
<proteinExistence type="evidence at protein level"/>
<evidence type="ECO:0000250" key="1"/>
<evidence type="ECO:0000255" key="2"/>
<evidence type="ECO:0000269" key="3">
    <source>
    </source>
</evidence>
<evidence type="ECO:0000269" key="4">
    <source>
    </source>
</evidence>
<evidence type="ECO:0000269" key="5">
    <source>
    </source>
</evidence>
<evidence type="ECO:0000269" key="6">
    <source>
    </source>
</evidence>
<evidence type="ECO:0000305" key="7"/>
<sequence>MASTQVVFIVTLFLYLLITRWRRKNEKSFIASEEPKQPEWRDYTPAELKEYNGSKNSLVFLAIKGTVYNVTMGSKFYGPQGPYSAFAGHDASRGLAKNSFDDEFIPDSDAEELDDCSDLNDEERQALNDWKAFFDQKYQAVGRLISPREARAAATISETEEKVAHN</sequence>
<protein>
    <recommendedName>
        <fullName>Cytochrome P450 regulator dap1</fullName>
    </recommendedName>
</protein>
<feature type="chain" id="PRO_0000121746" description="Cytochrome P450 regulator dap1">
    <location>
        <begin position="1"/>
        <end position="166"/>
    </location>
</feature>
<feature type="transmembrane region" description="Helical" evidence="2">
    <location>
        <begin position="4"/>
        <end position="21"/>
    </location>
</feature>
<feature type="domain" description="Cytochrome b5 heme-binding">
    <location>
        <begin position="42"/>
        <end position="145"/>
    </location>
</feature>
<feature type="binding site">
    <location>
        <position position="138"/>
    </location>
    <ligand>
        <name>heme</name>
        <dbReference type="ChEBI" id="CHEBI:30413"/>
    </ligand>
</feature>
<feature type="modified residue" description="Phosphoserine" evidence="6">
    <location>
        <position position="108"/>
    </location>
</feature>
<feature type="mutagenesis site" description="Binds heme." evidence="5">
    <location>
        <begin position="4"/>
        <end position="21"/>
    </location>
</feature>
<feature type="mutagenesis site" description="No heme-binding; accumulates 24-methylene lanosterol, ergosta-5,7,24(28)-trienol and ergosta-5,7-dienol; when associated with 4-T--W-21 del." evidence="5">
    <original>Y</original>
    <variation>F</variation>
    <location>
        <position position="138"/>
    </location>
</feature>
<accession>O13995</accession>
<reference key="1">
    <citation type="journal article" date="2002" name="Nature">
        <title>The genome sequence of Schizosaccharomyces pombe.</title>
        <authorList>
            <person name="Wood V."/>
            <person name="Gwilliam R."/>
            <person name="Rajandream M.A."/>
            <person name="Lyne M.H."/>
            <person name="Lyne R."/>
            <person name="Stewart A."/>
            <person name="Sgouros J.G."/>
            <person name="Peat N."/>
            <person name="Hayles J."/>
            <person name="Baker S.G."/>
            <person name="Basham D."/>
            <person name="Bowman S."/>
            <person name="Brooks K."/>
            <person name="Brown D."/>
            <person name="Brown S."/>
            <person name="Chillingworth T."/>
            <person name="Churcher C.M."/>
            <person name="Collins M."/>
            <person name="Connor R."/>
            <person name="Cronin A."/>
            <person name="Davis P."/>
            <person name="Feltwell T."/>
            <person name="Fraser A."/>
            <person name="Gentles S."/>
            <person name="Goble A."/>
            <person name="Hamlin N."/>
            <person name="Harris D.E."/>
            <person name="Hidalgo J."/>
            <person name="Hodgson G."/>
            <person name="Holroyd S."/>
            <person name="Hornsby T."/>
            <person name="Howarth S."/>
            <person name="Huckle E.J."/>
            <person name="Hunt S."/>
            <person name="Jagels K."/>
            <person name="James K.D."/>
            <person name="Jones L."/>
            <person name="Jones M."/>
            <person name="Leather S."/>
            <person name="McDonald S."/>
            <person name="McLean J."/>
            <person name="Mooney P."/>
            <person name="Moule S."/>
            <person name="Mungall K.L."/>
            <person name="Murphy L.D."/>
            <person name="Niblett D."/>
            <person name="Odell C."/>
            <person name="Oliver K."/>
            <person name="O'Neil S."/>
            <person name="Pearson D."/>
            <person name="Quail M.A."/>
            <person name="Rabbinowitsch E."/>
            <person name="Rutherford K.M."/>
            <person name="Rutter S."/>
            <person name="Saunders D."/>
            <person name="Seeger K."/>
            <person name="Sharp S."/>
            <person name="Skelton J."/>
            <person name="Simmonds M.N."/>
            <person name="Squares R."/>
            <person name="Squares S."/>
            <person name="Stevens K."/>
            <person name="Taylor K."/>
            <person name="Taylor R.G."/>
            <person name="Tivey A."/>
            <person name="Walsh S.V."/>
            <person name="Warren T."/>
            <person name="Whitehead S."/>
            <person name="Woodward J.R."/>
            <person name="Volckaert G."/>
            <person name="Aert R."/>
            <person name="Robben J."/>
            <person name="Grymonprez B."/>
            <person name="Weltjens I."/>
            <person name="Vanstreels E."/>
            <person name="Rieger M."/>
            <person name="Schaefer M."/>
            <person name="Mueller-Auer S."/>
            <person name="Gabel C."/>
            <person name="Fuchs M."/>
            <person name="Duesterhoeft A."/>
            <person name="Fritzc C."/>
            <person name="Holzer E."/>
            <person name="Moestl D."/>
            <person name="Hilbert H."/>
            <person name="Borzym K."/>
            <person name="Langer I."/>
            <person name="Beck A."/>
            <person name="Lehrach H."/>
            <person name="Reinhardt R."/>
            <person name="Pohl T.M."/>
            <person name="Eger P."/>
            <person name="Zimmermann W."/>
            <person name="Wedler H."/>
            <person name="Wambutt R."/>
            <person name="Purnelle B."/>
            <person name="Goffeau A."/>
            <person name="Cadieu E."/>
            <person name="Dreano S."/>
            <person name="Gloux S."/>
            <person name="Lelaure V."/>
            <person name="Mottier S."/>
            <person name="Galibert F."/>
            <person name="Aves S.J."/>
            <person name="Xiang Z."/>
            <person name="Hunt C."/>
            <person name="Moore K."/>
            <person name="Hurst S.M."/>
            <person name="Lucas M."/>
            <person name="Rochet M."/>
            <person name="Gaillardin C."/>
            <person name="Tallada V.A."/>
            <person name="Garzon A."/>
            <person name="Thode G."/>
            <person name="Daga R.R."/>
            <person name="Cruzado L."/>
            <person name="Jimenez J."/>
            <person name="Sanchez M."/>
            <person name="del Rey F."/>
            <person name="Benito J."/>
            <person name="Dominguez A."/>
            <person name="Revuelta J.L."/>
            <person name="Moreno S."/>
            <person name="Armstrong J."/>
            <person name="Forsburg S.L."/>
            <person name="Cerutti L."/>
            <person name="Lowe T."/>
            <person name="McCombie W.R."/>
            <person name="Paulsen I."/>
            <person name="Potashkin J."/>
            <person name="Shpakovski G.V."/>
            <person name="Ussery D."/>
            <person name="Barrell B.G."/>
            <person name="Nurse P."/>
        </authorList>
    </citation>
    <scope>NUCLEOTIDE SEQUENCE [LARGE SCALE GENOMIC DNA]</scope>
    <source>
        <strain>972 / ATCC 24843</strain>
    </source>
</reference>
<reference key="2">
    <citation type="journal article" date="2006" name="Mol. Cell. Biol.">
        <title>Sterol regulatory element binding protein is a principal regulator of anaerobic gene expression in fission yeast.</title>
        <authorList>
            <person name="Todd B.L."/>
            <person name="Stewart E.V."/>
            <person name="Burg J.S."/>
            <person name="Hughes A.L."/>
            <person name="Espenshade P.J."/>
        </authorList>
    </citation>
    <scope>INDUCTION</scope>
</reference>
<reference key="3">
    <citation type="journal article" date="2006" name="Nat. Biotechnol.">
        <title>ORFeome cloning and global analysis of protein localization in the fission yeast Schizosaccharomyces pombe.</title>
        <authorList>
            <person name="Matsuyama A."/>
            <person name="Arai R."/>
            <person name="Yashiroda Y."/>
            <person name="Shirai A."/>
            <person name="Kamata A."/>
            <person name="Sekido S."/>
            <person name="Kobayashi Y."/>
            <person name="Hashimoto A."/>
            <person name="Hamamoto M."/>
            <person name="Hiraoka Y."/>
            <person name="Horinouchi S."/>
            <person name="Yoshida M."/>
        </authorList>
    </citation>
    <scope>SUBCELLULAR LOCATION [LARGE SCALE ANALYSIS]</scope>
</reference>
<reference key="4">
    <citation type="journal article" date="2007" name="Cell Metab.">
        <title>Dap1/PGRMC1 binds and regulates cytochrome P450 enzymes.</title>
        <authorList>
            <person name="Hughes A.L."/>
            <person name="Powell D.W."/>
            <person name="Bard M."/>
            <person name="Eckstein J."/>
            <person name="Barbuch R."/>
            <person name="Link A.J."/>
            <person name="Espenshade P.J."/>
        </authorList>
    </citation>
    <scope>IDENTIFICATION BY MASS SPECTROMETRY</scope>
    <scope>FUNCTION</scope>
    <scope>INTERACTION WITH ERG5 AND ERG11</scope>
    <scope>INDUCTION</scope>
    <scope>HEME-BINDING</scope>
    <scope>MUTAGENESIS OF 4-THR--TRP-21 AND TYR-138</scope>
    <scope>DISRUPTION PHENOTYPE</scope>
</reference>
<reference key="5">
    <citation type="journal article" date="2008" name="J. Proteome Res.">
        <title>Phosphoproteome analysis of fission yeast.</title>
        <authorList>
            <person name="Wilson-Grady J.T."/>
            <person name="Villen J."/>
            <person name="Gygi S.P."/>
        </authorList>
    </citation>
    <scope>PHOSPHORYLATION [LARGE SCALE ANALYSIS] AT SER-108</scope>
    <scope>IDENTIFICATION BY MASS SPECTROMETRY</scope>
</reference>
<dbReference type="EMBL" id="CU329670">
    <property type="protein sequence ID" value="CAB16199.1"/>
    <property type="molecule type" value="Genomic_DNA"/>
</dbReference>
<dbReference type="PIR" id="T38433">
    <property type="entry name" value="T38433"/>
</dbReference>
<dbReference type="RefSeq" id="NP_594461.1">
    <property type="nucleotide sequence ID" value="NM_001019890.2"/>
</dbReference>
<dbReference type="SMR" id="O13995"/>
<dbReference type="BioGRID" id="279141">
    <property type="interactions" value="7"/>
</dbReference>
<dbReference type="FunCoup" id="O13995">
    <property type="interactions" value="412"/>
</dbReference>
<dbReference type="STRING" id="284812.O13995"/>
<dbReference type="iPTMnet" id="O13995"/>
<dbReference type="PaxDb" id="4896-SPAC25B8.01.1"/>
<dbReference type="EnsemblFungi" id="SPAC25B8.01.1">
    <property type="protein sequence ID" value="SPAC25B8.01.1:pep"/>
    <property type="gene ID" value="SPAC25B8.01"/>
</dbReference>
<dbReference type="GeneID" id="2542688"/>
<dbReference type="KEGG" id="spo:2542688"/>
<dbReference type="PomBase" id="SPAC25B8.01">
    <property type="gene designation" value="dap1"/>
</dbReference>
<dbReference type="VEuPathDB" id="FungiDB:SPAC25B8.01"/>
<dbReference type="eggNOG" id="KOG1110">
    <property type="taxonomic scope" value="Eukaryota"/>
</dbReference>
<dbReference type="HOGENOM" id="CLU_042860_1_1_1"/>
<dbReference type="InParanoid" id="O13995"/>
<dbReference type="OMA" id="ANEWETQ"/>
<dbReference type="PhylomeDB" id="O13995"/>
<dbReference type="Reactome" id="R-SPO-6798695">
    <property type="pathway name" value="Neutrophil degranulation"/>
</dbReference>
<dbReference type="Reactome" id="R-SPO-9013405">
    <property type="pathway name" value="RHOD GTPase cycle"/>
</dbReference>
<dbReference type="Reactome" id="R-SPO-9707616">
    <property type="pathway name" value="Heme signaling"/>
</dbReference>
<dbReference type="PRO" id="PR:O13995"/>
<dbReference type="Proteomes" id="UP000002485">
    <property type="component" value="Chromosome I"/>
</dbReference>
<dbReference type="GO" id="GO:0012505">
    <property type="term" value="C:endomembrane system"/>
    <property type="evidence" value="ECO:0000318"/>
    <property type="project" value="GO_Central"/>
</dbReference>
<dbReference type="GO" id="GO:0005783">
    <property type="term" value="C:endoplasmic reticulum"/>
    <property type="evidence" value="ECO:0007005"/>
    <property type="project" value="PomBase"/>
</dbReference>
<dbReference type="GO" id="GO:0005789">
    <property type="term" value="C:endoplasmic reticulum membrane"/>
    <property type="evidence" value="ECO:0000305"/>
    <property type="project" value="PomBase"/>
</dbReference>
<dbReference type="GO" id="GO:0016020">
    <property type="term" value="C:membrane"/>
    <property type="evidence" value="ECO:0000318"/>
    <property type="project" value="GO_Central"/>
</dbReference>
<dbReference type="GO" id="GO:0008047">
    <property type="term" value="F:enzyme activator activity"/>
    <property type="evidence" value="ECO:0000315"/>
    <property type="project" value="PomBase"/>
</dbReference>
<dbReference type="GO" id="GO:0020037">
    <property type="term" value="F:heme binding"/>
    <property type="evidence" value="ECO:0000315"/>
    <property type="project" value="PomBase"/>
</dbReference>
<dbReference type="GO" id="GO:0046872">
    <property type="term" value="F:metal ion binding"/>
    <property type="evidence" value="ECO:0007669"/>
    <property type="project" value="UniProtKB-KW"/>
</dbReference>
<dbReference type="GO" id="GO:0005496">
    <property type="term" value="F:steroid binding"/>
    <property type="evidence" value="ECO:0000255"/>
    <property type="project" value="PomBase"/>
</dbReference>
<dbReference type="GO" id="GO:0006696">
    <property type="term" value="P:ergosterol biosynthetic process"/>
    <property type="evidence" value="ECO:0000315"/>
    <property type="project" value="PomBase"/>
</dbReference>
<dbReference type="FunFam" id="3.10.120.10:FF:000003">
    <property type="entry name" value="membrane-associated progesterone receptor component 1"/>
    <property type="match status" value="1"/>
</dbReference>
<dbReference type="Gene3D" id="3.10.120.10">
    <property type="entry name" value="Cytochrome b5-like heme/steroid binding domain"/>
    <property type="match status" value="1"/>
</dbReference>
<dbReference type="InterPro" id="IPR001199">
    <property type="entry name" value="Cyt_B5-like_heme/steroid-bd"/>
</dbReference>
<dbReference type="InterPro" id="IPR036400">
    <property type="entry name" value="Cyt_B5-like_heme/steroid_sf"/>
</dbReference>
<dbReference type="InterPro" id="IPR050577">
    <property type="entry name" value="MAPR/NEUFC/NENF-like"/>
</dbReference>
<dbReference type="PANTHER" id="PTHR10281">
    <property type="entry name" value="MEMBRANE-ASSOCIATED PROGESTERONE RECEPTOR COMPONENT-RELATED"/>
    <property type="match status" value="1"/>
</dbReference>
<dbReference type="PANTHER" id="PTHR10281:SF72">
    <property type="entry name" value="NEUDESIN"/>
    <property type="match status" value="1"/>
</dbReference>
<dbReference type="Pfam" id="PF00173">
    <property type="entry name" value="Cyt-b5"/>
    <property type="match status" value="1"/>
</dbReference>
<dbReference type="SMART" id="SM01117">
    <property type="entry name" value="Cyt-b5"/>
    <property type="match status" value="1"/>
</dbReference>
<dbReference type="SUPFAM" id="SSF55856">
    <property type="entry name" value="Cytochrome b5-like heme/steroid binding domain"/>
    <property type="match status" value="1"/>
</dbReference>
<gene>
    <name type="primary">dap1</name>
    <name type="ORF">SPAC25B8.01</name>
    <name type="ORF">SPAC26H5.15</name>
</gene>
<organism>
    <name type="scientific">Schizosaccharomyces pombe (strain 972 / ATCC 24843)</name>
    <name type="common">Fission yeast</name>
    <dbReference type="NCBI Taxonomy" id="284812"/>
    <lineage>
        <taxon>Eukaryota</taxon>
        <taxon>Fungi</taxon>
        <taxon>Dikarya</taxon>
        <taxon>Ascomycota</taxon>
        <taxon>Taphrinomycotina</taxon>
        <taxon>Schizosaccharomycetes</taxon>
        <taxon>Schizosaccharomycetales</taxon>
        <taxon>Schizosaccharomycetaceae</taxon>
        <taxon>Schizosaccharomyces</taxon>
    </lineage>
</organism>
<comment type="function">
    <text evidence="5">Required for sterol biosynthesis. Functions as a positive regulator of cytochrome P450 enzymes erg5 and erg11. Function requires bound heme.</text>
</comment>
<comment type="subunit">
    <text evidence="5">Interacts with erg5 and erg11.</text>
</comment>
<comment type="subcellular location">
    <subcellularLocation>
        <location evidence="4">Endoplasmic reticulum</location>
    </subcellularLocation>
    <subcellularLocation>
        <location evidence="7">Membrane</location>
        <topology evidence="7">Single-pass membrane protein</topology>
    </subcellularLocation>
</comment>
<comment type="induction">
    <text evidence="3 5">Up-regulated by sre1 in response to absence of oxygen.</text>
</comment>
<comment type="domain">
    <text evidence="1">The cytochrome b5 heme-binding domain lacks the conserved iron-binding His residues at positions 77 and 101.</text>
</comment>
<comment type="disruption phenotype">
    <text evidence="5">Cells are viable under normal growth conditions, but contains a reduced amount of ergosterol and elevated amounts of the ergosterol biosynthetic intermediates, 24-methylene lanosterol, ergosta-5,7,24(28)-trienol and ergosta-5,7-dienol. Deletion mutant is sensitive to the inhibitors of sterol synthesis itraconazole and CoCl(2).</text>
</comment>
<comment type="similarity">
    <text evidence="7">Belongs to the cytochrome b5 family. MAPR subfamily.</text>
</comment>